<comment type="similarity">
    <text evidence="2">Belongs to the UPF0758 family.</text>
</comment>
<gene>
    <name type="ordered locus">Shewana3_3770</name>
</gene>
<proteinExistence type="inferred from homology"/>
<keyword id="KW-0378">Hydrolase</keyword>
<keyword id="KW-0479">Metal-binding</keyword>
<keyword id="KW-0482">Metalloprotease</keyword>
<keyword id="KW-0645">Protease</keyword>
<keyword id="KW-0862">Zinc</keyword>
<name>Y3770_SHESA</name>
<protein>
    <recommendedName>
        <fullName>UPF0758 protein Shewana3_3770</fullName>
    </recommendedName>
</protein>
<accession>A0L1R9</accession>
<reference key="1">
    <citation type="submission" date="2006-09" db="EMBL/GenBank/DDBJ databases">
        <title>Complete sequence of chromosome 1 of Shewanella sp. ANA-3.</title>
        <authorList>
            <person name="Copeland A."/>
            <person name="Lucas S."/>
            <person name="Lapidus A."/>
            <person name="Barry K."/>
            <person name="Detter J.C."/>
            <person name="Glavina del Rio T."/>
            <person name="Hammon N."/>
            <person name="Israni S."/>
            <person name="Dalin E."/>
            <person name="Tice H."/>
            <person name="Pitluck S."/>
            <person name="Chertkov O."/>
            <person name="Brettin T."/>
            <person name="Bruce D."/>
            <person name="Han C."/>
            <person name="Tapia R."/>
            <person name="Gilna P."/>
            <person name="Schmutz J."/>
            <person name="Larimer F."/>
            <person name="Land M."/>
            <person name="Hauser L."/>
            <person name="Kyrpides N."/>
            <person name="Kim E."/>
            <person name="Newman D."/>
            <person name="Salticov C."/>
            <person name="Konstantinidis K."/>
            <person name="Klappenback J."/>
            <person name="Tiedje J."/>
            <person name="Richardson P."/>
        </authorList>
    </citation>
    <scope>NUCLEOTIDE SEQUENCE [LARGE SCALE GENOMIC DNA]</scope>
    <source>
        <strain>ANA-3</strain>
    </source>
</reference>
<organism>
    <name type="scientific">Shewanella sp. (strain ANA-3)</name>
    <dbReference type="NCBI Taxonomy" id="94122"/>
    <lineage>
        <taxon>Bacteria</taxon>
        <taxon>Pseudomonadati</taxon>
        <taxon>Pseudomonadota</taxon>
        <taxon>Gammaproteobacteria</taxon>
        <taxon>Alteromonadales</taxon>
        <taxon>Shewanellaceae</taxon>
        <taxon>Shewanella</taxon>
    </lineage>
</organism>
<evidence type="ECO:0000255" key="1">
    <source>
        <dbReference type="PROSITE-ProRule" id="PRU01182"/>
    </source>
</evidence>
<evidence type="ECO:0000305" key="2"/>
<sequence length="225" mass="24854">MAIKDWPEGEGPRDKLLVKGAAHLSDAELLAVLLRNGLSGLNAVDLARSLIHEFGGLRSLLCAPKHQVCRLPGVGPVKYAQLQAAAELARRVAQENLQRGQVLTNPDLTRDYLMRQLADRSYEVFAILLLDSQHRVIQFVELFRGTIDSASVYPREVVSLVLEKKAAAVIVCHNHPSGIAEPSQADRRITERLKNALATIDVSLLDHMVVGDREIVSFAERGWIN</sequence>
<feature type="chain" id="PRO_1000001695" description="UPF0758 protein Shewana3_3770">
    <location>
        <begin position="1"/>
        <end position="225"/>
    </location>
</feature>
<feature type="domain" description="MPN" evidence="1">
    <location>
        <begin position="102"/>
        <end position="224"/>
    </location>
</feature>
<feature type="short sequence motif" description="JAMM motif" evidence="1">
    <location>
        <begin position="173"/>
        <end position="186"/>
    </location>
</feature>
<feature type="binding site" evidence="1">
    <location>
        <position position="173"/>
    </location>
    <ligand>
        <name>Zn(2+)</name>
        <dbReference type="ChEBI" id="CHEBI:29105"/>
        <note>catalytic</note>
    </ligand>
</feature>
<feature type="binding site" evidence="1">
    <location>
        <position position="175"/>
    </location>
    <ligand>
        <name>Zn(2+)</name>
        <dbReference type="ChEBI" id="CHEBI:29105"/>
        <note>catalytic</note>
    </ligand>
</feature>
<feature type="binding site" evidence="1">
    <location>
        <position position="186"/>
    </location>
    <ligand>
        <name>Zn(2+)</name>
        <dbReference type="ChEBI" id="CHEBI:29105"/>
        <note>catalytic</note>
    </ligand>
</feature>
<dbReference type="EMBL" id="CP000469">
    <property type="protein sequence ID" value="ABK49988.1"/>
    <property type="molecule type" value="Genomic_DNA"/>
</dbReference>
<dbReference type="SMR" id="A0L1R9"/>
<dbReference type="STRING" id="94122.Shewana3_3770"/>
<dbReference type="KEGG" id="shn:Shewana3_3770"/>
<dbReference type="eggNOG" id="COG2003">
    <property type="taxonomic scope" value="Bacteria"/>
</dbReference>
<dbReference type="HOGENOM" id="CLU_073529_0_1_6"/>
<dbReference type="OrthoDB" id="9804482at2"/>
<dbReference type="Proteomes" id="UP000002589">
    <property type="component" value="Chromosome"/>
</dbReference>
<dbReference type="GO" id="GO:0046872">
    <property type="term" value="F:metal ion binding"/>
    <property type="evidence" value="ECO:0007669"/>
    <property type="project" value="UniProtKB-KW"/>
</dbReference>
<dbReference type="GO" id="GO:0008237">
    <property type="term" value="F:metallopeptidase activity"/>
    <property type="evidence" value="ECO:0007669"/>
    <property type="project" value="UniProtKB-KW"/>
</dbReference>
<dbReference type="GO" id="GO:0006508">
    <property type="term" value="P:proteolysis"/>
    <property type="evidence" value="ECO:0007669"/>
    <property type="project" value="UniProtKB-KW"/>
</dbReference>
<dbReference type="CDD" id="cd08071">
    <property type="entry name" value="MPN_DUF2466"/>
    <property type="match status" value="1"/>
</dbReference>
<dbReference type="FunFam" id="3.40.140.10:FF:000032">
    <property type="entry name" value="DNA repair protein RadC"/>
    <property type="match status" value="1"/>
</dbReference>
<dbReference type="Gene3D" id="3.40.140.10">
    <property type="entry name" value="Cytidine Deaminase, domain 2"/>
    <property type="match status" value="1"/>
</dbReference>
<dbReference type="InterPro" id="IPR037518">
    <property type="entry name" value="MPN"/>
</dbReference>
<dbReference type="InterPro" id="IPR025657">
    <property type="entry name" value="RadC_JAB"/>
</dbReference>
<dbReference type="InterPro" id="IPR010994">
    <property type="entry name" value="RuvA_2-like"/>
</dbReference>
<dbReference type="InterPro" id="IPR001405">
    <property type="entry name" value="UPF0758"/>
</dbReference>
<dbReference type="InterPro" id="IPR020891">
    <property type="entry name" value="UPF0758_CS"/>
</dbReference>
<dbReference type="InterPro" id="IPR046778">
    <property type="entry name" value="UPF0758_N"/>
</dbReference>
<dbReference type="NCBIfam" id="NF000642">
    <property type="entry name" value="PRK00024.1"/>
    <property type="match status" value="1"/>
</dbReference>
<dbReference type="NCBIfam" id="TIGR00608">
    <property type="entry name" value="radc"/>
    <property type="match status" value="1"/>
</dbReference>
<dbReference type="PANTHER" id="PTHR30471">
    <property type="entry name" value="DNA REPAIR PROTEIN RADC"/>
    <property type="match status" value="1"/>
</dbReference>
<dbReference type="PANTHER" id="PTHR30471:SF3">
    <property type="entry name" value="UPF0758 PROTEIN YEES-RELATED"/>
    <property type="match status" value="1"/>
</dbReference>
<dbReference type="Pfam" id="PF04002">
    <property type="entry name" value="RadC"/>
    <property type="match status" value="1"/>
</dbReference>
<dbReference type="Pfam" id="PF20582">
    <property type="entry name" value="UPF0758_N"/>
    <property type="match status" value="1"/>
</dbReference>
<dbReference type="SUPFAM" id="SSF102712">
    <property type="entry name" value="JAB1/MPN domain"/>
    <property type="match status" value="1"/>
</dbReference>
<dbReference type="SUPFAM" id="SSF47781">
    <property type="entry name" value="RuvA domain 2-like"/>
    <property type="match status" value="1"/>
</dbReference>
<dbReference type="PROSITE" id="PS50249">
    <property type="entry name" value="MPN"/>
    <property type="match status" value="1"/>
</dbReference>
<dbReference type="PROSITE" id="PS01302">
    <property type="entry name" value="UPF0758"/>
    <property type="match status" value="1"/>
</dbReference>